<proteinExistence type="inferred from homology"/>
<feature type="chain" id="PRO_0000325500" description="Probable malate:quinone oxidoreductase">
    <location>
        <begin position="1"/>
        <end position="501"/>
    </location>
</feature>
<evidence type="ECO:0000255" key="1">
    <source>
        <dbReference type="HAMAP-Rule" id="MF_00212"/>
    </source>
</evidence>
<name>MQO_MYCPA</name>
<gene>
    <name evidence="1" type="primary">mqo</name>
    <name type="ordered locus">MAP_2921c</name>
</gene>
<accession>Q73VU0</accession>
<organism>
    <name type="scientific">Mycolicibacterium paratuberculosis (strain ATCC BAA-968 / K-10)</name>
    <name type="common">Mycobacterium paratuberculosis</name>
    <dbReference type="NCBI Taxonomy" id="262316"/>
    <lineage>
        <taxon>Bacteria</taxon>
        <taxon>Bacillati</taxon>
        <taxon>Actinomycetota</taxon>
        <taxon>Actinomycetes</taxon>
        <taxon>Mycobacteriales</taxon>
        <taxon>Mycobacteriaceae</taxon>
        <taxon>Mycobacterium</taxon>
        <taxon>Mycobacterium avium complex (MAC)</taxon>
    </lineage>
</organism>
<protein>
    <recommendedName>
        <fullName evidence="1">Probable malate:quinone oxidoreductase</fullName>
        <ecNumber evidence="1">1.1.5.4</ecNumber>
    </recommendedName>
    <alternativeName>
        <fullName evidence="1">MQO</fullName>
    </alternativeName>
    <alternativeName>
        <fullName evidence="1">Malate dehydrogenase [quinone]</fullName>
    </alternativeName>
</protein>
<sequence length="501" mass="54937">MSSLARTTRADVVLVGAGIMSATLGALLRRLQPDWSMTFVERLDAVAAESSSPWNNAGTGHSALCELNYTPQRADGSIDIAKAVRINEQFQVTRQFWAYAVENGMLTDRGFVTPIPHASFVRGARAVEYLRRRQQALAPNPLFAGIELIEDADEFARRLPLMADRRDFSEPTALNWARHGTDVDFGALSRQLIGFCVRGGATALFGHQVHNLTRESDGSWTLLIRNRRTGEKHWCNAKFVLVGAGGDALPLLQKSGIGEARGFAGFPIGGRFLRADNPVLTEAHRAKVYGAPAPGAPPLGALHLDLRYVNGKPWLVFGPYAGWSPKFLKHGHFTDLPRSVRPHNLVALLGVGVTQLTLLRYLIGQLRLSAPDRMRMLREFAPTAVDSDWELTVAGQRVQVIRRDRRRGGVLDFDTTVVAAGDGSIAGLLGGSPGASTAVPIMLDVLQRCFADRYRSWLPALKEMVPSLGVTLSDEPALYEEVYSWGTKILGLDELDEERPK</sequence>
<reference key="1">
    <citation type="journal article" date="2005" name="Proc. Natl. Acad. Sci. U.S.A.">
        <title>The complete genome sequence of Mycobacterium avium subspecies paratuberculosis.</title>
        <authorList>
            <person name="Li L."/>
            <person name="Bannantine J.P."/>
            <person name="Zhang Q."/>
            <person name="Amonsin A."/>
            <person name="May B.J."/>
            <person name="Alt D."/>
            <person name="Banerji N."/>
            <person name="Kanjilal S."/>
            <person name="Kapur V."/>
        </authorList>
    </citation>
    <scope>NUCLEOTIDE SEQUENCE [LARGE SCALE GENOMIC DNA]</scope>
    <source>
        <strain>ATCC BAA-968 / K-10</strain>
    </source>
</reference>
<comment type="catalytic activity">
    <reaction evidence="1">
        <text>(S)-malate + a quinone = a quinol + oxaloacetate</text>
        <dbReference type="Rhea" id="RHEA:46012"/>
        <dbReference type="ChEBI" id="CHEBI:15589"/>
        <dbReference type="ChEBI" id="CHEBI:16452"/>
        <dbReference type="ChEBI" id="CHEBI:24646"/>
        <dbReference type="ChEBI" id="CHEBI:132124"/>
        <dbReference type="EC" id="1.1.5.4"/>
    </reaction>
</comment>
<comment type="cofactor">
    <cofactor evidence="1">
        <name>FAD</name>
        <dbReference type="ChEBI" id="CHEBI:57692"/>
    </cofactor>
</comment>
<comment type="pathway">
    <text evidence="1">Carbohydrate metabolism; tricarboxylic acid cycle; oxaloacetate from (S)-malate (quinone route): step 1/1.</text>
</comment>
<comment type="similarity">
    <text evidence="1">Belongs to the MQO family.</text>
</comment>
<dbReference type="EC" id="1.1.5.4" evidence="1"/>
<dbReference type="EMBL" id="AE016958">
    <property type="protein sequence ID" value="AAS05238.1"/>
    <property type="molecule type" value="Genomic_DNA"/>
</dbReference>
<dbReference type="RefSeq" id="WP_010949777.1">
    <property type="nucleotide sequence ID" value="NZ_CP106873.1"/>
</dbReference>
<dbReference type="SMR" id="Q73VU0"/>
<dbReference type="STRING" id="262316.MAP_2921c"/>
<dbReference type="KEGG" id="mpa:MAP_2921c"/>
<dbReference type="PATRIC" id="fig|262316.17.peg.3096"/>
<dbReference type="eggNOG" id="COG0579">
    <property type="taxonomic scope" value="Bacteria"/>
</dbReference>
<dbReference type="HOGENOM" id="CLU_028151_0_0_11"/>
<dbReference type="UniPathway" id="UPA00223">
    <property type="reaction ID" value="UER01008"/>
</dbReference>
<dbReference type="Proteomes" id="UP000000580">
    <property type="component" value="Chromosome"/>
</dbReference>
<dbReference type="GO" id="GO:0047545">
    <property type="term" value="F:2-hydroxyglutarate dehydrogenase activity"/>
    <property type="evidence" value="ECO:0007669"/>
    <property type="project" value="TreeGrafter"/>
</dbReference>
<dbReference type="GO" id="GO:0008924">
    <property type="term" value="F:L-malate dehydrogenase (quinone) activity"/>
    <property type="evidence" value="ECO:0007669"/>
    <property type="project" value="UniProtKB-UniRule"/>
</dbReference>
<dbReference type="GO" id="GO:0006099">
    <property type="term" value="P:tricarboxylic acid cycle"/>
    <property type="evidence" value="ECO:0007669"/>
    <property type="project" value="UniProtKB-UniRule"/>
</dbReference>
<dbReference type="HAMAP" id="MF_00212">
    <property type="entry name" value="MQO"/>
    <property type="match status" value="1"/>
</dbReference>
<dbReference type="InterPro" id="IPR036188">
    <property type="entry name" value="FAD/NAD-bd_sf"/>
</dbReference>
<dbReference type="InterPro" id="IPR006231">
    <property type="entry name" value="MQO"/>
</dbReference>
<dbReference type="NCBIfam" id="TIGR01320">
    <property type="entry name" value="mal_quin_oxido"/>
    <property type="match status" value="1"/>
</dbReference>
<dbReference type="NCBIfam" id="NF003606">
    <property type="entry name" value="PRK05257.2-1"/>
    <property type="match status" value="1"/>
</dbReference>
<dbReference type="NCBIfam" id="NF003611">
    <property type="entry name" value="PRK05257.3-2"/>
    <property type="match status" value="1"/>
</dbReference>
<dbReference type="PANTHER" id="PTHR43104">
    <property type="entry name" value="L-2-HYDROXYGLUTARATE DEHYDROGENASE, MITOCHONDRIAL"/>
    <property type="match status" value="1"/>
</dbReference>
<dbReference type="PANTHER" id="PTHR43104:SF2">
    <property type="entry name" value="L-2-HYDROXYGLUTARATE DEHYDROGENASE, MITOCHONDRIAL"/>
    <property type="match status" value="1"/>
</dbReference>
<dbReference type="Pfam" id="PF06039">
    <property type="entry name" value="Mqo"/>
    <property type="match status" value="1"/>
</dbReference>
<dbReference type="SUPFAM" id="SSF51905">
    <property type="entry name" value="FAD/NAD(P)-binding domain"/>
    <property type="match status" value="1"/>
</dbReference>
<keyword id="KW-0274">FAD</keyword>
<keyword id="KW-0285">Flavoprotein</keyword>
<keyword id="KW-0560">Oxidoreductase</keyword>
<keyword id="KW-1185">Reference proteome</keyword>
<keyword id="KW-0816">Tricarboxylic acid cycle</keyword>